<reference key="1">
    <citation type="journal article" date="2002" name="Mol. Microbiol.">
        <title>Identification of a second Listeria secA gene associated with protein secretion and the rough phenotype.</title>
        <authorList>
            <person name="Lenz L.L."/>
            <person name="Portnoy D.A."/>
        </authorList>
    </citation>
    <scope>NUCLEOTIDE SEQUENCE [GENOMIC DNA]</scope>
    <scope>DISRUPTION PHENOTYPE</scope>
    <source>
        <strain>10403S</strain>
    </source>
</reference>
<reference key="2">
    <citation type="submission" date="2010-04" db="EMBL/GenBank/DDBJ databases">
        <title>The genome sequence of Listeria monocytogenes strain 10403S.</title>
        <authorList>
            <consortium name="The Broad Institute Genome Sequencing Platform"/>
            <consortium name="The Broad Institute Genome Sequencing Center for Infectious Disease"/>
            <person name="Borowsky M."/>
            <person name="Borodovsky M."/>
            <person name="Young S.K."/>
            <person name="Zeng Q."/>
            <person name="Koehrsen M."/>
            <person name="Fitzgerald M."/>
            <person name="Wiedmann M."/>
            <person name="Swaminathan B."/>
            <person name="Lauer P."/>
            <person name="Portnoy D."/>
            <person name="Cossart P."/>
            <person name="Buchrieser C."/>
            <person name="Higgins D."/>
            <person name="Abouelleil A."/>
            <person name="Alvarado L."/>
            <person name="Arachchi H.M."/>
            <person name="Berlin A."/>
            <person name="Borenstein D."/>
            <person name="Brown A."/>
            <person name="Chapman S.B."/>
            <person name="Chen Z."/>
            <person name="Dunbar C.D."/>
            <person name="Engels R."/>
            <person name="Freedman E."/>
            <person name="Gearin G."/>
            <person name="Gellesch M."/>
            <person name="Goldberg J."/>
            <person name="Griggs A."/>
            <person name="Gujja S."/>
            <person name="Heilman E."/>
            <person name="Heiman D."/>
            <person name="Howarth C."/>
            <person name="Jen D."/>
            <person name="Larson L."/>
            <person name="Lui A."/>
            <person name="MacDonald J."/>
            <person name="Mehta T."/>
            <person name="Montmayeur A."/>
            <person name="Neiman D."/>
            <person name="Park D."/>
            <person name="Pearson M."/>
            <person name="Priest M."/>
            <person name="Richards J."/>
            <person name="Roberts A."/>
            <person name="Saif S."/>
            <person name="Shea T."/>
            <person name="Shenoy N."/>
            <person name="Sisk P."/>
            <person name="Stolte C."/>
            <person name="Sykes S."/>
            <person name="Walk T."/>
            <person name="White J."/>
            <person name="Yandava C."/>
            <person name="Haas B."/>
            <person name="Nusbaum C."/>
            <person name="Birren B."/>
        </authorList>
    </citation>
    <scope>NUCLEOTIDE SEQUENCE [LARGE SCALE GENOMIC DNA]</scope>
    <source>
        <strain>10403S</strain>
    </source>
</reference>
<accession>G2K3V6</accession>
<accession>Q2WCM9</accession>
<accession>Q2WCN0</accession>
<accession>Q8RLX5</accession>
<accession>Q8Y9E7</accession>
<protein>
    <recommendedName>
        <fullName evidence="1">Protein translocase subunit SecA 2</fullName>
        <ecNumber evidence="1">7.4.2.8</ecNumber>
    </recommendedName>
</protein>
<organism>
    <name type="scientific">Listeria monocytogenes serotype 1/2a (strain 10403S)</name>
    <dbReference type="NCBI Taxonomy" id="393133"/>
    <lineage>
        <taxon>Bacteria</taxon>
        <taxon>Bacillati</taxon>
        <taxon>Bacillota</taxon>
        <taxon>Bacilli</taxon>
        <taxon>Bacillales</taxon>
        <taxon>Listeriaceae</taxon>
        <taxon>Listeria</taxon>
    </lineage>
</organism>
<feature type="chain" id="PRO_0000419036" description="Protein translocase subunit SecA 2">
    <location>
        <begin position="1"/>
        <end position="776"/>
    </location>
</feature>
<feature type="binding site" evidence="1">
    <location>
        <position position="80"/>
    </location>
    <ligand>
        <name>ATP</name>
        <dbReference type="ChEBI" id="CHEBI:30616"/>
    </ligand>
</feature>
<feature type="binding site" evidence="1">
    <location>
        <begin position="98"/>
        <end position="102"/>
    </location>
    <ligand>
        <name>ATP</name>
        <dbReference type="ChEBI" id="CHEBI:30616"/>
    </ligand>
</feature>
<feature type="binding site" evidence="1">
    <location>
        <position position="486"/>
    </location>
    <ligand>
        <name>ATP</name>
        <dbReference type="ChEBI" id="CHEBI:30616"/>
    </ligand>
</feature>
<comment type="function">
    <text evidence="1">Part of the Sec protein translocase complex. Interacts with the SecYEG preprotein conducting channel. Has a central role in coupling the hydrolysis of ATP to the transfer of proteins into and across the cell membrane, serving as an ATP-driven molecular motor driving the stepwise translocation of polypeptide chains across the membrane.</text>
</comment>
<comment type="catalytic activity">
    <reaction evidence="1">
        <text>ATP + H2O + cellular proteinSide 1 = ADP + phosphate + cellular proteinSide 2.</text>
        <dbReference type="EC" id="7.4.2.8"/>
    </reaction>
</comment>
<comment type="subunit">
    <text evidence="1">Monomer and homodimer. Part of the essential Sec protein translocation apparatus which comprises SecA, SecYEG and auxiliary proteins SecDF. Other proteins may also be involved.</text>
</comment>
<comment type="subcellular location">
    <subcellularLocation>
        <location evidence="1">Cell membrane</location>
        <topology evidence="1">Peripheral membrane protein</topology>
        <orientation evidence="1">Cytoplasmic side</orientation>
    </subcellularLocation>
    <subcellularLocation>
        <location evidence="1">Cytoplasm</location>
    </subcellularLocation>
    <text evidence="1">Distribution is 50-50.</text>
</comment>
<comment type="disruption phenotype">
    <text evidence="2">Cells show reduced secretion of autolysins p60 and MurA, as well as at least 7 other proteins, and are responsible for a smooth to rough phenotype change. These deletion mutants are not as virulent as wild-type when used in mouse infection tests. Large in-frame deletions of this gene reduce secretion of autolysins p60 and MurA, as well as at least 7 other proteins, and are responsible for a smooth to rough phenotype change. These deletion mutants are not as virulent as wild-type when used in mouse infection tests.</text>
</comment>
<comment type="similarity">
    <text evidence="1">Belongs to the SecA family.</text>
</comment>
<proteinExistence type="inferred from homology"/>
<name>SECA2_LISM4</name>
<keyword id="KW-0067">ATP-binding</keyword>
<keyword id="KW-1003">Cell membrane</keyword>
<keyword id="KW-0963">Cytoplasm</keyword>
<keyword id="KW-0472">Membrane</keyword>
<keyword id="KW-0547">Nucleotide-binding</keyword>
<keyword id="KW-0653">Protein transport</keyword>
<keyword id="KW-1278">Translocase</keyword>
<keyword id="KW-0811">Translocation</keyword>
<keyword id="KW-0813">Transport</keyword>
<dbReference type="EC" id="7.4.2.8" evidence="1"/>
<dbReference type="EMBL" id="AY072791">
    <property type="protein sequence ID" value="AAL68395.1"/>
    <property type="molecule type" value="Genomic_DNA"/>
</dbReference>
<dbReference type="EMBL" id="CP002002">
    <property type="protein sequence ID" value="AEO05584.1"/>
    <property type="molecule type" value="Genomic_DNA"/>
</dbReference>
<dbReference type="RefSeq" id="WP_014600575.1">
    <property type="nucleotide sequence ID" value="NC_017544.1"/>
</dbReference>
<dbReference type="SMR" id="G2K3V6"/>
<dbReference type="KEGG" id="lmt:LMRG_00265"/>
<dbReference type="HOGENOM" id="CLU_005314_3_0_9"/>
<dbReference type="Proteomes" id="UP000001288">
    <property type="component" value="Chromosome"/>
</dbReference>
<dbReference type="GO" id="GO:0031522">
    <property type="term" value="C:cell envelope Sec protein transport complex"/>
    <property type="evidence" value="ECO:0007669"/>
    <property type="project" value="TreeGrafter"/>
</dbReference>
<dbReference type="GO" id="GO:0005829">
    <property type="term" value="C:cytosol"/>
    <property type="evidence" value="ECO:0007669"/>
    <property type="project" value="TreeGrafter"/>
</dbReference>
<dbReference type="GO" id="GO:0005886">
    <property type="term" value="C:plasma membrane"/>
    <property type="evidence" value="ECO:0007669"/>
    <property type="project" value="UniProtKB-SubCell"/>
</dbReference>
<dbReference type="GO" id="GO:0005524">
    <property type="term" value="F:ATP binding"/>
    <property type="evidence" value="ECO:0007669"/>
    <property type="project" value="UniProtKB-UniRule"/>
</dbReference>
<dbReference type="GO" id="GO:0008564">
    <property type="term" value="F:protein-exporting ATPase activity"/>
    <property type="evidence" value="ECO:0007669"/>
    <property type="project" value="UniProtKB-EC"/>
</dbReference>
<dbReference type="GO" id="GO:0065002">
    <property type="term" value="P:intracellular protein transmembrane transport"/>
    <property type="evidence" value="ECO:0007669"/>
    <property type="project" value="UniProtKB-UniRule"/>
</dbReference>
<dbReference type="GO" id="GO:0017038">
    <property type="term" value="P:protein import"/>
    <property type="evidence" value="ECO:0007669"/>
    <property type="project" value="InterPro"/>
</dbReference>
<dbReference type="GO" id="GO:0006605">
    <property type="term" value="P:protein targeting"/>
    <property type="evidence" value="ECO:0007669"/>
    <property type="project" value="UniProtKB-UniRule"/>
</dbReference>
<dbReference type="GO" id="GO:0043952">
    <property type="term" value="P:protein transport by the Sec complex"/>
    <property type="evidence" value="ECO:0007669"/>
    <property type="project" value="TreeGrafter"/>
</dbReference>
<dbReference type="CDD" id="cd17928">
    <property type="entry name" value="DEXDc_SecA"/>
    <property type="match status" value="1"/>
</dbReference>
<dbReference type="CDD" id="cd18803">
    <property type="entry name" value="SF2_C_secA"/>
    <property type="match status" value="1"/>
</dbReference>
<dbReference type="FunFam" id="3.40.50.300:FF:000429">
    <property type="entry name" value="Preprotein translocase subunit SecA"/>
    <property type="match status" value="1"/>
</dbReference>
<dbReference type="FunFam" id="1.10.3060.10:FF:000009">
    <property type="entry name" value="Protein translocase subunit SecA 2"/>
    <property type="match status" value="1"/>
</dbReference>
<dbReference type="Gene3D" id="1.10.3060.10">
    <property type="entry name" value="Helical scaffold and wing domains of SecA"/>
    <property type="match status" value="1"/>
</dbReference>
<dbReference type="Gene3D" id="3.40.50.300">
    <property type="entry name" value="P-loop containing nucleotide triphosphate hydrolases"/>
    <property type="match status" value="3"/>
</dbReference>
<dbReference type="Gene3D" id="3.90.1440.10">
    <property type="entry name" value="SecA, preprotein cross-linking domain"/>
    <property type="match status" value="1"/>
</dbReference>
<dbReference type="HAMAP" id="MF_01382">
    <property type="entry name" value="SecA"/>
    <property type="match status" value="1"/>
</dbReference>
<dbReference type="InterPro" id="IPR014001">
    <property type="entry name" value="Helicase_ATP-bd"/>
</dbReference>
<dbReference type="InterPro" id="IPR001650">
    <property type="entry name" value="Helicase_C-like"/>
</dbReference>
<dbReference type="InterPro" id="IPR027417">
    <property type="entry name" value="P-loop_NTPase"/>
</dbReference>
<dbReference type="InterPro" id="IPR000185">
    <property type="entry name" value="SecA"/>
</dbReference>
<dbReference type="InterPro" id="IPR011115">
    <property type="entry name" value="SecA_DEAD"/>
</dbReference>
<dbReference type="InterPro" id="IPR014018">
    <property type="entry name" value="SecA_motor_DEAD"/>
</dbReference>
<dbReference type="InterPro" id="IPR011130">
    <property type="entry name" value="SecA_preprotein_X-link_dom"/>
</dbReference>
<dbReference type="InterPro" id="IPR044722">
    <property type="entry name" value="SecA_SF2_C"/>
</dbReference>
<dbReference type="InterPro" id="IPR011116">
    <property type="entry name" value="SecA_Wing/Scaffold"/>
</dbReference>
<dbReference type="InterPro" id="IPR036266">
    <property type="entry name" value="SecA_Wing/Scaffold_sf"/>
</dbReference>
<dbReference type="InterPro" id="IPR036670">
    <property type="entry name" value="SecA_X-link_sf"/>
</dbReference>
<dbReference type="NCBIfam" id="NF006630">
    <property type="entry name" value="PRK09200.1"/>
    <property type="match status" value="1"/>
</dbReference>
<dbReference type="NCBIfam" id="NF012136">
    <property type="entry name" value="SecA2_Lm"/>
    <property type="match status" value="1"/>
</dbReference>
<dbReference type="PANTHER" id="PTHR30612:SF0">
    <property type="entry name" value="CHLOROPLAST PROTEIN-TRANSPORTING ATPASE"/>
    <property type="match status" value="1"/>
</dbReference>
<dbReference type="PANTHER" id="PTHR30612">
    <property type="entry name" value="SECA INNER MEMBRANE COMPONENT OF SEC PROTEIN SECRETION SYSTEM"/>
    <property type="match status" value="1"/>
</dbReference>
<dbReference type="Pfam" id="PF21090">
    <property type="entry name" value="P-loop_SecA"/>
    <property type="match status" value="1"/>
</dbReference>
<dbReference type="Pfam" id="PF07517">
    <property type="entry name" value="SecA_DEAD"/>
    <property type="match status" value="1"/>
</dbReference>
<dbReference type="Pfam" id="PF01043">
    <property type="entry name" value="SecA_PP_bind"/>
    <property type="match status" value="1"/>
</dbReference>
<dbReference type="Pfam" id="PF07516">
    <property type="entry name" value="SecA_SW"/>
    <property type="match status" value="1"/>
</dbReference>
<dbReference type="PRINTS" id="PR00906">
    <property type="entry name" value="SECA"/>
</dbReference>
<dbReference type="SMART" id="SM00957">
    <property type="entry name" value="SecA_DEAD"/>
    <property type="match status" value="1"/>
</dbReference>
<dbReference type="SMART" id="SM00958">
    <property type="entry name" value="SecA_PP_bind"/>
    <property type="match status" value="1"/>
</dbReference>
<dbReference type="SUPFAM" id="SSF81886">
    <property type="entry name" value="Helical scaffold and wing domains of SecA"/>
    <property type="match status" value="1"/>
</dbReference>
<dbReference type="SUPFAM" id="SSF52540">
    <property type="entry name" value="P-loop containing nucleoside triphosphate hydrolases"/>
    <property type="match status" value="2"/>
</dbReference>
<dbReference type="SUPFAM" id="SSF81767">
    <property type="entry name" value="Pre-protein crosslinking domain of SecA"/>
    <property type="match status" value="1"/>
</dbReference>
<dbReference type="PROSITE" id="PS51196">
    <property type="entry name" value="SECA_MOTOR_DEAD"/>
    <property type="match status" value="1"/>
</dbReference>
<sequence>MRQNYDDRKIVKQYREIARQIVKKEGLYKNMDQAELCEQTNFWREKFKTKPMTDRDKINIFALAREAASRIIGLDAVVVQLIGALVLGDGKVAEMKTGEGKTLMSLFVMFIEVMRGNRVHLVTANEYLARRDREEIGQVLEYLGVSVALNESGLDIAQKKAIYTADVIYGTASEFGFDYLRDNMVRQKEDKVQSGLDFVLIDEADSILIDEARTPLLISDRKEEDLSLYHKANKLVKKMMKDDYEMEEHKRFVWLNDAGIEKAQKFWGVESLYSAEAQSELRITMLLMRAHFLMHKDKDYVVLDDEVLIIDPHTGRALPGRRFNDGLHQAIEAKEGVEVKEESRTLATITIQNYFRMYKKISGMTGTAKTEEEEFRQIYNMDVVVIPTNLRVNREDMQDDIFYTKKEKGRAIVYEVSWRYEKGQPTLIGTSSIKSNEWISGLLDAAGIPHQVLNAKNHAQEAEIIAKAGKRGMVTLATNMAGRGTDIKLDPDVHKLGGLAVIGTERHESRRIDLQLMGRSGRRGDPGFSKFMISLEDDLLEQFESKSWEKLSAKLKRKAPRDGKPVNSRKIHAVVVDAQKRLEGANYDIRKDLLSYDEVIDLQRKMVYKERDLLLERNKLGVSSEKILREVAEYSFIHPSDIPEEELEIYYSRQKELLGGTKFPISFDQVTLMEPREVVEEIVSWHKKERNKFPAETIAAIEREVYLNLMDQMWVMHLDAMVQLREGIHLRAYGQQDPLVMYQKEGAQLFEKFQADYHFYFAHALLELDPDGLIQG</sequence>
<gene>
    <name evidence="1" type="primary">secA2</name>
    <name type="ordered locus">LMRG_00265</name>
</gene>
<evidence type="ECO:0000255" key="1">
    <source>
        <dbReference type="HAMAP-Rule" id="MF_01382"/>
    </source>
</evidence>
<evidence type="ECO:0000269" key="2">
    <source>
    </source>
</evidence>